<feature type="chain" id="PRO_0000096740" description="Putative N-terminal acetyltransferase 2">
    <location>
        <begin position="1"/>
        <end position="288"/>
    </location>
</feature>
<feature type="region of interest" description="Disordered" evidence="1">
    <location>
        <begin position="68"/>
        <end position="90"/>
    </location>
</feature>
<feature type="sequence conflict" description="In Ref. 1." evidence="3" ref="1">
    <original>Q</original>
    <variation>K</variation>
    <location>
        <position position="61"/>
    </location>
</feature>
<feature type="sequence conflict" description="In Ref. 1." evidence="3" ref="1">
    <original>R</original>
    <variation>S</variation>
    <location>
        <position position="63"/>
    </location>
</feature>
<feature type="sequence conflict" description="In Ref. 1; AAA34812." evidence="3" ref="1">
    <original>V</original>
    <variation>L</variation>
    <location>
        <position position="218"/>
    </location>
</feature>
<keyword id="KW-0012">Acyltransferase</keyword>
<keyword id="KW-0963">Cytoplasm</keyword>
<keyword id="KW-1185">Reference proteome</keyword>
<keyword id="KW-0808">Transferase</keyword>
<evidence type="ECO:0000256" key="1">
    <source>
        <dbReference type="SAM" id="MobiDB-lite"/>
    </source>
</evidence>
<evidence type="ECO:0000269" key="2">
    <source>
    </source>
</evidence>
<evidence type="ECO:0000305" key="3"/>
<proteinExistence type="evidence at protein level"/>
<protein>
    <recommendedName>
        <fullName>Putative N-terminal acetyltransferase 2</fullName>
        <ecNumber>2.3.1.-</ecNumber>
    </recommendedName>
    <alternativeName>
        <fullName>Amino-terminal, alpha-amino, acetyltransferase 2</fullName>
    </alternativeName>
</protein>
<gene>
    <name type="primary">NAT2</name>
    <name type="ordered locus">YGR147C</name>
    <name type="ORF">G6630</name>
</gene>
<reference key="1">
    <citation type="journal article" date="1994" name="J. Biol. Chem.">
        <title>NAT2, an essential gene encoding methionine N alpha-acetyltransferase in the yeast Saccharomyces cerevisiae.</title>
        <authorList>
            <person name="Sherman F."/>
            <person name="Kulkarni M.S."/>
        </authorList>
    </citation>
    <scope>NUCLEOTIDE SEQUENCE [GENOMIC DNA]</scope>
</reference>
<reference key="2">
    <citation type="journal article" date="1995" name="Yeast">
        <title>The sequence of a 27 kb segment on the right arm of chromosome VII from Saccharomyces cerevisiae reveals MOL1, NAT2, RPL30B, RSR1, CYS4, PEM1/CHO2, NSR1 genes and ten new open reading frames.</title>
        <authorList>
            <person name="Skala J."/>
            <person name="Nawrocki A."/>
            <person name="Goffeau A."/>
        </authorList>
    </citation>
    <scope>NUCLEOTIDE SEQUENCE [GENOMIC DNA]</scope>
    <source>
        <strain>ATCC 204508 / S288c</strain>
    </source>
</reference>
<reference key="3">
    <citation type="journal article" date="1997" name="Nature">
        <title>The nucleotide sequence of Saccharomyces cerevisiae chromosome VII.</title>
        <authorList>
            <person name="Tettelin H."/>
            <person name="Agostoni-Carbone M.L."/>
            <person name="Albermann K."/>
            <person name="Albers M."/>
            <person name="Arroyo J."/>
            <person name="Backes U."/>
            <person name="Barreiros T."/>
            <person name="Bertani I."/>
            <person name="Bjourson A.J."/>
            <person name="Brueckner M."/>
            <person name="Bruschi C.V."/>
            <person name="Carignani G."/>
            <person name="Castagnoli L."/>
            <person name="Cerdan E."/>
            <person name="Clemente M.L."/>
            <person name="Coblenz A."/>
            <person name="Coglievina M."/>
            <person name="Coissac E."/>
            <person name="Defoor E."/>
            <person name="Del Bino S."/>
            <person name="Delius H."/>
            <person name="Delneri D."/>
            <person name="de Wergifosse P."/>
            <person name="Dujon B."/>
            <person name="Durand P."/>
            <person name="Entian K.-D."/>
            <person name="Eraso P."/>
            <person name="Escribano V."/>
            <person name="Fabiani L."/>
            <person name="Fartmann B."/>
            <person name="Feroli F."/>
            <person name="Feuermann M."/>
            <person name="Frontali L."/>
            <person name="Garcia-Gonzalez M."/>
            <person name="Garcia-Saez M.I."/>
            <person name="Goffeau A."/>
            <person name="Guerreiro P."/>
            <person name="Hani J."/>
            <person name="Hansen M."/>
            <person name="Hebling U."/>
            <person name="Hernandez K."/>
            <person name="Heumann K."/>
            <person name="Hilger F."/>
            <person name="Hofmann B."/>
            <person name="Indge K.J."/>
            <person name="James C.M."/>
            <person name="Klima R."/>
            <person name="Koetter P."/>
            <person name="Kramer B."/>
            <person name="Kramer W."/>
            <person name="Lauquin G."/>
            <person name="Leuther H."/>
            <person name="Louis E.J."/>
            <person name="Maillier E."/>
            <person name="Marconi A."/>
            <person name="Martegani E."/>
            <person name="Mazon M.J."/>
            <person name="Mazzoni C."/>
            <person name="McReynolds A.D.K."/>
            <person name="Melchioretto P."/>
            <person name="Mewes H.-W."/>
            <person name="Minenkova O."/>
            <person name="Mueller-Auer S."/>
            <person name="Nawrocki A."/>
            <person name="Netter P."/>
            <person name="Neu R."/>
            <person name="Nombela C."/>
            <person name="Oliver S.G."/>
            <person name="Panzeri L."/>
            <person name="Paoluzi S."/>
            <person name="Plevani P."/>
            <person name="Portetelle D."/>
            <person name="Portillo F."/>
            <person name="Potier S."/>
            <person name="Purnelle B."/>
            <person name="Rieger M."/>
            <person name="Riles L."/>
            <person name="Rinaldi T."/>
            <person name="Robben J."/>
            <person name="Rodrigues-Pousada C."/>
            <person name="Rodriguez-Belmonte E."/>
            <person name="Rodriguez-Torres A.M."/>
            <person name="Rose M."/>
            <person name="Ruzzi M."/>
            <person name="Saliola M."/>
            <person name="Sanchez-Perez M."/>
            <person name="Schaefer B."/>
            <person name="Schaefer M."/>
            <person name="Scharfe M."/>
            <person name="Schmidheini T."/>
            <person name="Schreer A."/>
            <person name="Skala J."/>
            <person name="Souciet J.-L."/>
            <person name="Steensma H.Y."/>
            <person name="Talla E."/>
            <person name="Thierry A."/>
            <person name="Vandenbol M."/>
            <person name="van der Aart Q.J.M."/>
            <person name="Van Dyck L."/>
            <person name="Vanoni M."/>
            <person name="Verhasselt P."/>
            <person name="Voet M."/>
            <person name="Volckaert G."/>
            <person name="Wambutt R."/>
            <person name="Watson M.D."/>
            <person name="Weber N."/>
            <person name="Wedler E."/>
            <person name="Wedler H."/>
            <person name="Wipfli P."/>
            <person name="Wolf K."/>
            <person name="Wright L.F."/>
            <person name="Zaccaria P."/>
            <person name="Zimmermann M."/>
            <person name="Zollner A."/>
            <person name="Kleine K."/>
        </authorList>
    </citation>
    <scope>NUCLEOTIDE SEQUENCE [LARGE SCALE GENOMIC DNA]</scope>
    <source>
        <strain>ATCC 204508 / S288c</strain>
    </source>
</reference>
<reference key="4">
    <citation type="journal article" date="2014" name="G3 (Bethesda)">
        <title>The reference genome sequence of Saccharomyces cerevisiae: Then and now.</title>
        <authorList>
            <person name="Engel S.R."/>
            <person name="Dietrich F.S."/>
            <person name="Fisk D.G."/>
            <person name="Binkley G."/>
            <person name="Balakrishnan R."/>
            <person name="Costanzo M.C."/>
            <person name="Dwight S.S."/>
            <person name="Hitz B.C."/>
            <person name="Karra K."/>
            <person name="Nash R.S."/>
            <person name="Weng S."/>
            <person name="Wong E.D."/>
            <person name="Lloyd P."/>
            <person name="Skrzypek M.S."/>
            <person name="Miyasato S.R."/>
            <person name="Simison M."/>
            <person name="Cherry J.M."/>
        </authorList>
    </citation>
    <scope>GENOME REANNOTATION</scope>
    <source>
        <strain>ATCC 204508 / S288c</strain>
    </source>
</reference>
<reference key="5">
    <citation type="journal article" date="2003" name="Nature">
        <title>Global analysis of protein expression in yeast.</title>
        <authorList>
            <person name="Ghaemmaghami S."/>
            <person name="Huh W.-K."/>
            <person name="Bower K."/>
            <person name="Howson R.W."/>
            <person name="Belle A."/>
            <person name="Dephoure N."/>
            <person name="O'Shea E.K."/>
            <person name="Weissman J.S."/>
        </authorList>
    </citation>
    <scope>LEVEL OF PROTEIN EXPRESSION [LARGE SCALE ANALYSIS]</scope>
</reference>
<name>NAT2_YEAST</name>
<organism>
    <name type="scientific">Saccharomyces cerevisiae (strain ATCC 204508 / S288c)</name>
    <name type="common">Baker's yeast</name>
    <dbReference type="NCBI Taxonomy" id="559292"/>
    <lineage>
        <taxon>Eukaryota</taxon>
        <taxon>Fungi</taxon>
        <taxon>Dikarya</taxon>
        <taxon>Ascomycota</taxon>
        <taxon>Saccharomycotina</taxon>
        <taxon>Saccharomycetes</taxon>
        <taxon>Saccharomycetales</taxon>
        <taxon>Saccharomycetaceae</taxon>
        <taxon>Saccharomyces</taxon>
    </lineage>
</organism>
<accession>P37293</accession>
<accession>D6VUS8</accession>
<dbReference type="EC" id="2.3.1.-"/>
<dbReference type="EMBL" id="L25608">
    <property type="protein sequence ID" value="AAA34812.1"/>
    <property type="molecule type" value="Genomic_DNA"/>
</dbReference>
<dbReference type="EMBL" id="X85807">
    <property type="protein sequence ID" value="CAA59805.1"/>
    <property type="molecule type" value="Genomic_DNA"/>
</dbReference>
<dbReference type="EMBL" id="Z72932">
    <property type="protein sequence ID" value="CAA97161.1"/>
    <property type="molecule type" value="Genomic_DNA"/>
</dbReference>
<dbReference type="EMBL" id="BK006941">
    <property type="protein sequence ID" value="DAA08239.1"/>
    <property type="molecule type" value="Genomic_DNA"/>
</dbReference>
<dbReference type="PIR" id="S60438">
    <property type="entry name" value="S60438"/>
</dbReference>
<dbReference type="RefSeq" id="NP_011663.3">
    <property type="nucleotide sequence ID" value="NM_001181276.3"/>
</dbReference>
<dbReference type="BioGRID" id="33395">
    <property type="interactions" value="35"/>
</dbReference>
<dbReference type="FunCoup" id="P37293">
    <property type="interactions" value="43"/>
</dbReference>
<dbReference type="STRING" id="4932.YGR147C"/>
<dbReference type="PaxDb" id="4932-YGR147C"/>
<dbReference type="PeptideAtlas" id="P37293"/>
<dbReference type="EnsemblFungi" id="YGR147C_mRNA">
    <property type="protein sequence ID" value="YGR147C"/>
    <property type="gene ID" value="YGR147C"/>
</dbReference>
<dbReference type="GeneID" id="853050"/>
<dbReference type="KEGG" id="sce:YGR147C"/>
<dbReference type="AGR" id="SGD:S000003379"/>
<dbReference type="SGD" id="S000003379">
    <property type="gene designation" value="NAT2"/>
</dbReference>
<dbReference type="VEuPathDB" id="FungiDB:YGR147C"/>
<dbReference type="eggNOG" id="KOG4526">
    <property type="taxonomic scope" value="Eukaryota"/>
</dbReference>
<dbReference type="GeneTree" id="ENSGT00940000156134"/>
<dbReference type="HOGENOM" id="CLU_059211_2_0_1"/>
<dbReference type="InParanoid" id="P37293"/>
<dbReference type="OMA" id="VHSMGQE"/>
<dbReference type="OrthoDB" id="426386at2759"/>
<dbReference type="BioCyc" id="YEAST:YGR147C-MONOMER"/>
<dbReference type="BioGRID-ORCS" id="853050">
    <property type="hits" value="0 hits in 10 CRISPR screens"/>
</dbReference>
<dbReference type="PRO" id="PR:P37293"/>
<dbReference type="Proteomes" id="UP000002311">
    <property type="component" value="Chromosome VII"/>
</dbReference>
<dbReference type="RNAct" id="P37293">
    <property type="molecule type" value="protein"/>
</dbReference>
<dbReference type="GO" id="GO:0005739">
    <property type="term" value="C:mitochondrion"/>
    <property type="evidence" value="ECO:0007005"/>
    <property type="project" value="SGD"/>
</dbReference>
<dbReference type="GO" id="GO:0016746">
    <property type="term" value="F:acyltransferase activity"/>
    <property type="evidence" value="ECO:0007669"/>
    <property type="project" value="UniProtKB-KW"/>
</dbReference>
<dbReference type="InterPro" id="IPR045866">
    <property type="entry name" value="FAM210A/B-like"/>
</dbReference>
<dbReference type="InterPro" id="IPR009688">
    <property type="entry name" value="FAM210A/B-like_dom"/>
</dbReference>
<dbReference type="PANTHER" id="PTHR21377">
    <property type="entry name" value="PROTEIN FAM210B, MITOCHONDRIAL"/>
    <property type="match status" value="1"/>
</dbReference>
<dbReference type="PANTHER" id="PTHR21377:SF0">
    <property type="entry name" value="PROTEIN FAM210B, MITOCHONDRIAL"/>
    <property type="match status" value="1"/>
</dbReference>
<dbReference type="Pfam" id="PF06916">
    <property type="entry name" value="FAM210A-B_dom"/>
    <property type="match status" value="1"/>
</dbReference>
<sequence>MMVPRISASPVFKRIFLRWGFVTLPIQKTVSHTLRRDFSAPCRSMVKCLLLRPGISVHSAQDRKFYSTEEKSSQFDENKSKSNNGKKNEPHGIKGLMAKYGYSALIVYILLTCVDLPLCFLGVHSLGEEKIKIYLNRGKQLIGMGEPDESKVIQDVRRKQAHREAVQAENADKVEDASRKTFNERWQEMKDSTLLAELLIAYGIHKSLIIVRVPLTAVLTPSFVKLLQRFGIDLMKKQKKVFQTMASGAKIRYKGNNPSDFIKNEGTALDITKRKPRTKGQKWFDGLM</sequence>
<comment type="function">
    <text>Maybe involved in N-terminal acetylation of proteins. N-acetylation plays a role in normal eukaryotic translation and processing, protect against proteolytic degradation and protein turnover.</text>
</comment>
<comment type="subunit">
    <text evidence="3">Heterooligomeric.</text>
</comment>
<comment type="subcellular location">
    <subcellularLocation>
        <location evidence="3">Cytoplasm</location>
    </subcellularLocation>
</comment>
<comment type="miscellaneous">
    <text evidence="2">Present with 1240 molecules/cell in log phase SD medium.</text>
</comment>